<comment type="function">
    <text evidence="1">Responsible for the release of ribosomes from messenger RNA at the termination of protein biosynthesis. May increase the efficiency of translation by recycling ribosomes from one round of translation to another.</text>
</comment>
<comment type="subcellular location">
    <subcellularLocation>
        <location evidence="1">Cytoplasm</location>
    </subcellularLocation>
</comment>
<comment type="similarity">
    <text evidence="1">Belongs to the RRF family.</text>
</comment>
<proteinExistence type="inferred from homology"/>
<sequence length="184" mass="20642">MINDLKKDSEQRMLKTLESLEQGFAKVRTGRAHPSILNGVMVPYYGSDVPLNQVANVGVEDSRTLIVQPFERTMVAAIDKAIRESDLGLNPITADSIRVPLPALTEETRRDMQKIARSEAENAKVAIRNIRRDVLGDIKALLKEKEISEDDERRAGDDIQKITDKYVAEVDKRLAAKEAELMKV</sequence>
<feature type="chain" id="PRO_1000194885" description="Ribosome-recycling factor">
    <location>
        <begin position="1"/>
        <end position="184"/>
    </location>
</feature>
<name>RRF_ACIB5</name>
<organism>
    <name type="scientific">Acinetobacter baumannii (strain AB0057)</name>
    <dbReference type="NCBI Taxonomy" id="480119"/>
    <lineage>
        <taxon>Bacteria</taxon>
        <taxon>Pseudomonadati</taxon>
        <taxon>Pseudomonadota</taxon>
        <taxon>Gammaproteobacteria</taxon>
        <taxon>Moraxellales</taxon>
        <taxon>Moraxellaceae</taxon>
        <taxon>Acinetobacter</taxon>
        <taxon>Acinetobacter calcoaceticus/baumannii complex</taxon>
    </lineage>
</organism>
<evidence type="ECO:0000255" key="1">
    <source>
        <dbReference type="HAMAP-Rule" id="MF_00040"/>
    </source>
</evidence>
<reference key="1">
    <citation type="journal article" date="2008" name="J. Bacteriol.">
        <title>Comparative genome sequence analysis of multidrug-resistant Acinetobacter baumannii.</title>
        <authorList>
            <person name="Adams M.D."/>
            <person name="Goglin K."/>
            <person name="Molyneaux N."/>
            <person name="Hujer K.M."/>
            <person name="Lavender H."/>
            <person name="Jamison J.J."/>
            <person name="MacDonald I.J."/>
            <person name="Martin K.M."/>
            <person name="Russo T."/>
            <person name="Campagnari A.A."/>
            <person name="Hujer A.M."/>
            <person name="Bonomo R.A."/>
            <person name="Gill S.R."/>
        </authorList>
    </citation>
    <scope>NUCLEOTIDE SEQUENCE [LARGE SCALE GENOMIC DNA]</scope>
    <source>
        <strain>AB0057</strain>
    </source>
</reference>
<dbReference type="EMBL" id="CP001182">
    <property type="protein sequence ID" value="ACJ42435.1"/>
    <property type="molecule type" value="Genomic_DNA"/>
</dbReference>
<dbReference type="RefSeq" id="WP_000606428.1">
    <property type="nucleotide sequence ID" value="NC_011586.2"/>
</dbReference>
<dbReference type="SMR" id="B7I9V2"/>
<dbReference type="GeneID" id="92894236"/>
<dbReference type="KEGG" id="abn:AB57_2319"/>
<dbReference type="HOGENOM" id="CLU_073981_2_1_6"/>
<dbReference type="Proteomes" id="UP000007094">
    <property type="component" value="Chromosome"/>
</dbReference>
<dbReference type="GO" id="GO:0005829">
    <property type="term" value="C:cytosol"/>
    <property type="evidence" value="ECO:0007669"/>
    <property type="project" value="GOC"/>
</dbReference>
<dbReference type="GO" id="GO:0043023">
    <property type="term" value="F:ribosomal large subunit binding"/>
    <property type="evidence" value="ECO:0007669"/>
    <property type="project" value="TreeGrafter"/>
</dbReference>
<dbReference type="GO" id="GO:0002184">
    <property type="term" value="P:cytoplasmic translational termination"/>
    <property type="evidence" value="ECO:0007669"/>
    <property type="project" value="TreeGrafter"/>
</dbReference>
<dbReference type="CDD" id="cd00520">
    <property type="entry name" value="RRF"/>
    <property type="match status" value="1"/>
</dbReference>
<dbReference type="FunFam" id="1.10.132.20:FF:000001">
    <property type="entry name" value="Ribosome-recycling factor"/>
    <property type="match status" value="1"/>
</dbReference>
<dbReference type="FunFam" id="3.30.1360.40:FF:000001">
    <property type="entry name" value="Ribosome-recycling factor"/>
    <property type="match status" value="1"/>
</dbReference>
<dbReference type="Gene3D" id="3.30.1360.40">
    <property type="match status" value="1"/>
</dbReference>
<dbReference type="Gene3D" id="1.10.132.20">
    <property type="entry name" value="Ribosome-recycling factor"/>
    <property type="match status" value="1"/>
</dbReference>
<dbReference type="HAMAP" id="MF_00040">
    <property type="entry name" value="RRF"/>
    <property type="match status" value="1"/>
</dbReference>
<dbReference type="InterPro" id="IPR002661">
    <property type="entry name" value="Ribosome_recyc_fac"/>
</dbReference>
<dbReference type="InterPro" id="IPR023584">
    <property type="entry name" value="Ribosome_recyc_fac_dom"/>
</dbReference>
<dbReference type="InterPro" id="IPR036191">
    <property type="entry name" value="RRF_sf"/>
</dbReference>
<dbReference type="NCBIfam" id="TIGR00496">
    <property type="entry name" value="frr"/>
    <property type="match status" value="1"/>
</dbReference>
<dbReference type="PANTHER" id="PTHR20982:SF3">
    <property type="entry name" value="MITOCHONDRIAL RIBOSOME RECYCLING FACTOR PSEUDO 1"/>
    <property type="match status" value="1"/>
</dbReference>
<dbReference type="PANTHER" id="PTHR20982">
    <property type="entry name" value="RIBOSOME RECYCLING FACTOR"/>
    <property type="match status" value="1"/>
</dbReference>
<dbReference type="Pfam" id="PF01765">
    <property type="entry name" value="RRF"/>
    <property type="match status" value="1"/>
</dbReference>
<dbReference type="SUPFAM" id="SSF55194">
    <property type="entry name" value="Ribosome recycling factor, RRF"/>
    <property type="match status" value="1"/>
</dbReference>
<keyword id="KW-0963">Cytoplasm</keyword>
<keyword id="KW-0648">Protein biosynthesis</keyword>
<protein>
    <recommendedName>
        <fullName evidence="1">Ribosome-recycling factor</fullName>
        <shortName evidence="1">RRF</shortName>
    </recommendedName>
    <alternativeName>
        <fullName evidence="1">Ribosome-releasing factor</fullName>
    </alternativeName>
</protein>
<accession>B7I9V2</accession>
<gene>
    <name evidence="1" type="primary">frr</name>
    <name type="ordered locus">AB57_2319</name>
</gene>